<protein>
    <recommendedName>
        <fullName evidence="1">Probable transaldolase</fullName>
        <ecNumber evidence="1">2.2.1.2</ecNumber>
    </recommendedName>
</protein>
<organism>
    <name type="scientific">Methanococcus maripaludis (strain DSM 14266 / JCM 13030 / NBRC 101832 / S2 / LL)</name>
    <dbReference type="NCBI Taxonomy" id="267377"/>
    <lineage>
        <taxon>Archaea</taxon>
        <taxon>Methanobacteriati</taxon>
        <taxon>Methanobacteriota</taxon>
        <taxon>Methanomada group</taxon>
        <taxon>Methanococci</taxon>
        <taxon>Methanococcales</taxon>
        <taxon>Methanococcaceae</taxon>
        <taxon>Methanococcus</taxon>
    </lineage>
</organism>
<gene>
    <name evidence="1" type="primary">tal</name>
    <name type="ordered locus">MMP1308</name>
</gene>
<dbReference type="EC" id="2.2.1.2" evidence="1"/>
<dbReference type="EMBL" id="BX950229">
    <property type="protein sequence ID" value="CAF30864.1"/>
    <property type="molecule type" value="Genomic_DNA"/>
</dbReference>
<dbReference type="RefSeq" id="WP_011171252.1">
    <property type="nucleotide sequence ID" value="NC_005791.1"/>
</dbReference>
<dbReference type="SMR" id="Q6LXP1"/>
<dbReference type="STRING" id="267377.MMP1308"/>
<dbReference type="EnsemblBacteria" id="CAF30864">
    <property type="protein sequence ID" value="CAF30864"/>
    <property type="gene ID" value="MMP1308"/>
</dbReference>
<dbReference type="GeneID" id="2762583"/>
<dbReference type="KEGG" id="mmp:MMP1308"/>
<dbReference type="PATRIC" id="fig|267377.15.peg.1343"/>
<dbReference type="eggNOG" id="arCOG05061">
    <property type="taxonomic scope" value="Archaea"/>
</dbReference>
<dbReference type="HOGENOM" id="CLU_079764_0_0_2"/>
<dbReference type="OrthoDB" id="6661at2157"/>
<dbReference type="UniPathway" id="UPA00115">
    <property type="reaction ID" value="UER00414"/>
</dbReference>
<dbReference type="Proteomes" id="UP000000590">
    <property type="component" value="Chromosome"/>
</dbReference>
<dbReference type="GO" id="GO:0005737">
    <property type="term" value="C:cytoplasm"/>
    <property type="evidence" value="ECO:0007669"/>
    <property type="project" value="UniProtKB-SubCell"/>
</dbReference>
<dbReference type="GO" id="GO:0016832">
    <property type="term" value="F:aldehyde-lyase activity"/>
    <property type="evidence" value="ECO:0007669"/>
    <property type="project" value="InterPro"/>
</dbReference>
<dbReference type="GO" id="GO:0004801">
    <property type="term" value="F:transaldolase activity"/>
    <property type="evidence" value="ECO:0007669"/>
    <property type="project" value="UniProtKB-UniRule"/>
</dbReference>
<dbReference type="GO" id="GO:0005975">
    <property type="term" value="P:carbohydrate metabolic process"/>
    <property type="evidence" value="ECO:0007669"/>
    <property type="project" value="InterPro"/>
</dbReference>
<dbReference type="GO" id="GO:0006098">
    <property type="term" value="P:pentose-phosphate shunt"/>
    <property type="evidence" value="ECO:0007669"/>
    <property type="project" value="UniProtKB-UniRule"/>
</dbReference>
<dbReference type="CDD" id="cd00956">
    <property type="entry name" value="Transaldolase_FSA"/>
    <property type="match status" value="1"/>
</dbReference>
<dbReference type="FunFam" id="3.20.20.70:FF:000018">
    <property type="entry name" value="Probable transaldolase"/>
    <property type="match status" value="1"/>
</dbReference>
<dbReference type="Gene3D" id="3.20.20.70">
    <property type="entry name" value="Aldolase class I"/>
    <property type="match status" value="1"/>
</dbReference>
<dbReference type="HAMAP" id="MF_00494">
    <property type="entry name" value="Transaldolase_3b"/>
    <property type="match status" value="1"/>
</dbReference>
<dbReference type="InterPro" id="IPR013785">
    <property type="entry name" value="Aldolase_TIM"/>
</dbReference>
<dbReference type="InterPro" id="IPR001585">
    <property type="entry name" value="TAL/FSA"/>
</dbReference>
<dbReference type="InterPro" id="IPR022999">
    <property type="entry name" value="Transaldolase_3B"/>
</dbReference>
<dbReference type="InterPro" id="IPR004731">
    <property type="entry name" value="Transaldolase_3B/F6P_aldolase"/>
</dbReference>
<dbReference type="InterPro" id="IPR018225">
    <property type="entry name" value="Transaldolase_AS"/>
</dbReference>
<dbReference type="InterPro" id="IPR033919">
    <property type="entry name" value="TSA/FSA_arc/bac"/>
</dbReference>
<dbReference type="NCBIfam" id="TIGR00875">
    <property type="entry name" value="fsa_talC_mipB"/>
    <property type="match status" value="1"/>
</dbReference>
<dbReference type="PANTHER" id="PTHR10683:SF40">
    <property type="entry name" value="FRUCTOSE-6-PHOSPHATE ALDOLASE 1-RELATED"/>
    <property type="match status" value="1"/>
</dbReference>
<dbReference type="PANTHER" id="PTHR10683">
    <property type="entry name" value="TRANSALDOLASE"/>
    <property type="match status" value="1"/>
</dbReference>
<dbReference type="Pfam" id="PF00923">
    <property type="entry name" value="TAL_FSA"/>
    <property type="match status" value="1"/>
</dbReference>
<dbReference type="SUPFAM" id="SSF51569">
    <property type="entry name" value="Aldolase"/>
    <property type="match status" value="1"/>
</dbReference>
<dbReference type="PROSITE" id="PS01054">
    <property type="entry name" value="TRANSALDOLASE_1"/>
    <property type="match status" value="1"/>
</dbReference>
<evidence type="ECO:0000255" key="1">
    <source>
        <dbReference type="HAMAP-Rule" id="MF_00494"/>
    </source>
</evidence>
<reference key="1">
    <citation type="journal article" date="2004" name="J. Bacteriol.">
        <title>Complete genome sequence of the genetically tractable hydrogenotrophic methanogen Methanococcus maripaludis.</title>
        <authorList>
            <person name="Hendrickson E.L."/>
            <person name="Kaul R."/>
            <person name="Zhou Y."/>
            <person name="Bovee D."/>
            <person name="Chapman P."/>
            <person name="Chung J."/>
            <person name="Conway de Macario E."/>
            <person name="Dodsworth J.A."/>
            <person name="Gillett W."/>
            <person name="Graham D.E."/>
            <person name="Hackett M."/>
            <person name="Haydock A.K."/>
            <person name="Kang A."/>
            <person name="Land M.L."/>
            <person name="Levy R."/>
            <person name="Lie T.J."/>
            <person name="Major T.A."/>
            <person name="Moore B.C."/>
            <person name="Porat I."/>
            <person name="Palmeiri A."/>
            <person name="Rouse G."/>
            <person name="Saenphimmachak C."/>
            <person name="Soell D."/>
            <person name="Van Dien S."/>
            <person name="Wang T."/>
            <person name="Whitman W.B."/>
            <person name="Xia Q."/>
            <person name="Zhang Y."/>
            <person name="Larimer F.W."/>
            <person name="Olson M.V."/>
            <person name="Leigh J.A."/>
        </authorList>
    </citation>
    <scope>NUCLEOTIDE SEQUENCE [LARGE SCALE GENOMIC DNA]</scope>
    <source>
        <strain>DSM 14266 / JCM 13030 / NBRC 101832 / S2 / LL</strain>
    </source>
</reference>
<keyword id="KW-0963">Cytoplasm</keyword>
<keyword id="KW-0570">Pentose shunt</keyword>
<keyword id="KW-1185">Reference proteome</keyword>
<keyword id="KW-0704">Schiff base</keyword>
<keyword id="KW-0808">Transferase</keyword>
<name>TAL_METMP</name>
<comment type="function">
    <text evidence="1">Transaldolase is important for the balance of metabolites in the pentose-phosphate pathway.</text>
</comment>
<comment type="catalytic activity">
    <reaction evidence="1">
        <text>D-sedoheptulose 7-phosphate + D-glyceraldehyde 3-phosphate = D-erythrose 4-phosphate + beta-D-fructose 6-phosphate</text>
        <dbReference type="Rhea" id="RHEA:17053"/>
        <dbReference type="ChEBI" id="CHEBI:16897"/>
        <dbReference type="ChEBI" id="CHEBI:57483"/>
        <dbReference type="ChEBI" id="CHEBI:57634"/>
        <dbReference type="ChEBI" id="CHEBI:59776"/>
        <dbReference type="EC" id="2.2.1.2"/>
    </reaction>
</comment>
<comment type="pathway">
    <text evidence="1">Carbohydrate degradation; pentose phosphate pathway; D-glyceraldehyde 3-phosphate and beta-D-fructose 6-phosphate from D-ribose 5-phosphate and D-xylulose 5-phosphate (non-oxidative stage): step 2/3.</text>
</comment>
<comment type="subcellular location">
    <subcellularLocation>
        <location evidence="1">Cytoplasm</location>
    </subcellularLocation>
</comment>
<comment type="similarity">
    <text evidence="1">Belongs to the transaldolase family. Type 3B subfamily.</text>
</comment>
<feature type="chain" id="PRO_1000060472" description="Probable transaldolase">
    <location>
        <begin position="1"/>
        <end position="215"/>
    </location>
</feature>
<feature type="active site" description="Schiff-base intermediate with substrate" evidence="1">
    <location>
        <position position="83"/>
    </location>
</feature>
<accession>Q6LXP1</accession>
<proteinExistence type="inferred from homology"/>
<sequence length="215" mass="23442">MKFFLDTANVEKIKEFNALGLVDGVTTNPSLIKKEGRDFYEVIKEICSIVDGPVSAEVIALDSEGMVKEARELVKLAENVVVKIPMTKEGMKAVNILSKEGIKTNVTLIFSANQALLAAKAGASYVSPFVGRLDDVGQDGMFLISEVMQVFGAYGIETEVIVASVRHPIHVLESAKMGADIATIPFDVLDKLFNHPLTDNGIAKFLSDWEAHMNR</sequence>